<protein>
    <recommendedName>
        <fullName evidence="12">Chitin synthase csmA</fullName>
        <ecNumber evidence="14">2.4.1.16</ecNumber>
    </recommendedName>
    <alternativeName>
        <fullName evidence="13">Chitin-UDP acetyl-glucosaminyl transferase csmA</fullName>
    </alternativeName>
    <alternativeName>
        <fullName evidence="12">Class-V chitin synthase csmA</fullName>
    </alternativeName>
</protein>
<evidence type="ECO:0000255" key="1"/>
<evidence type="ECO:0000255" key="2">
    <source>
        <dbReference type="PROSITE-ProRule" id="PRU00279"/>
    </source>
</evidence>
<evidence type="ECO:0000255" key="3">
    <source>
        <dbReference type="PROSITE-ProRule" id="PRU00498"/>
    </source>
</evidence>
<evidence type="ECO:0000255" key="4">
    <source>
        <dbReference type="PROSITE-ProRule" id="PRU00782"/>
    </source>
</evidence>
<evidence type="ECO:0000255" key="5">
    <source>
        <dbReference type="PROSITE-ProRule" id="PRU01342"/>
    </source>
</evidence>
<evidence type="ECO:0000256" key="6">
    <source>
        <dbReference type="SAM" id="MobiDB-lite"/>
    </source>
</evidence>
<evidence type="ECO:0000269" key="7">
    <source>
    </source>
</evidence>
<evidence type="ECO:0000269" key="8">
    <source>
    </source>
</evidence>
<evidence type="ECO:0000269" key="9">
    <source>
    </source>
</evidence>
<evidence type="ECO:0000269" key="10">
    <source>
    </source>
</evidence>
<evidence type="ECO:0000269" key="11">
    <source>
    </source>
</evidence>
<evidence type="ECO:0000303" key="12">
    <source>
    </source>
</evidence>
<evidence type="ECO:0000305" key="13"/>
<evidence type="ECO:0000305" key="14">
    <source>
    </source>
</evidence>
<evidence type="ECO:0000305" key="15">
    <source>
    </source>
</evidence>
<name>CHS5_EMEND</name>
<keyword id="KW-0009">Actin-binding</keyword>
<keyword id="KW-0067">ATP-binding</keyword>
<keyword id="KW-1003">Cell membrane</keyword>
<keyword id="KW-0325">Glycoprotein</keyword>
<keyword id="KW-0328">Glycosyltransferase</keyword>
<keyword id="KW-0472">Membrane</keyword>
<keyword id="KW-0505">Motor protein</keyword>
<keyword id="KW-0518">Myosin</keyword>
<keyword id="KW-0547">Nucleotide-binding</keyword>
<keyword id="KW-0808">Transferase</keyword>
<keyword id="KW-0812">Transmembrane</keyword>
<keyword id="KW-1133">Transmembrane helix</keyword>
<reference key="1">
    <citation type="journal article" date="1997" name="Biochem. Biophys. Res. Commun.">
        <title>A novel fungal gene encoding chitin synthase with a myosin motor-like domain.</title>
        <authorList>
            <person name="Fujiwara M."/>
            <person name="Horiuchi H."/>
            <person name="Ohta A."/>
            <person name="Takagi M."/>
        </authorList>
    </citation>
    <scope>NUCLEOTIDE SEQUENCE [GENOMIC DNA]</scope>
    <scope>DOMAIN</scope>
    <source>
        <strain>FGSC 89</strain>
    </source>
</reference>
<reference key="2">
    <citation type="journal article" date="1999" name="J. Bacteriol.">
        <title>Proliferation of intrahyphal hyphae caused by disruption of csmA, which encodes a class V chitin synthase with a myosin motor-like domain in Aspergillus nidulans.</title>
        <authorList>
            <person name="Horiuchi H."/>
            <person name="Fujiwara M."/>
            <person name="Yamashita S."/>
            <person name="Ohta A."/>
            <person name="Takagi M."/>
        </authorList>
    </citation>
    <scope>FUNCTION</scope>
    <scope>DISRUPTION PHENOTYPE</scope>
    <scope>DOMAIN</scope>
</reference>
<reference key="3">
    <citation type="journal article" date="2002" name="Biochem. Biophys. Res. Commun.">
        <title>csmA, a gene encoding a class V chitin synthase with a myosin motor-like domain of Aspergillus nidulans, is translated as a single polypeptide and regulated in response to osmotic conditions.</title>
        <authorList>
            <person name="Takeshita N."/>
            <person name="Ohta A."/>
            <person name="Horiuchi H."/>
        </authorList>
    </citation>
    <scope>INDUCTION</scope>
    <scope>FUNCTION</scope>
</reference>
<reference key="4">
    <citation type="journal article" date="2005" name="Mol. Biol. Cell">
        <title>CsmA, a class V chitin synthase with a myosin motor-like domain, is localized through direct interaction with the actin cytoskeleton in Aspergillus nidulans.</title>
        <authorList>
            <person name="Takeshita N."/>
            <person name="Ohta A."/>
            <person name="Horiuchi H."/>
        </authorList>
    </citation>
    <scope>DOMAIN</scope>
    <scope>SUBCELLULAR LOCATION</scope>
    <scope>FUNCTION</scope>
    <scope>INTERACTION WITH F-ACTIN</scope>
    <scope>MUTAGENESIS OF ARG-347 AND 347-ARG--VAL-356</scope>
</reference>
<reference key="5">
    <citation type="journal article" date="2006" name="Mol. Microbiol.">
        <title>Aspergillus nidulans class V and VI chitin synthases CsmA and CsmB, each with a myosin motor-like domain, perform compensatory functions that are essential for hyphal tip growth.</title>
        <authorList>
            <person name="Takeshita N."/>
            <person name="Yamashita S."/>
            <person name="Ohta A."/>
            <person name="Horiuchi H."/>
        </authorList>
    </citation>
    <scope>FUNCTION</scope>
</reference>
<reference key="6">
    <citation type="journal article" date="2015" name="PLoS ONE">
        <title>Transportation of Aspergillus nidulans Class III and V Chitin Synthases to the Hyphal Tips Depends on Conventional Kinesin.</title>
        <authorList>
            <person name="Takeshita N."/>
            <person name="Wernet V."/>
            <person name="Tsuizaki M."/>
            <person name="Gruen N."/>
            <person name="Hoshi H.O."/>
            <person name="Ohta A."/>
            <person name="Fischer R."/>
            <person name="Horiuchi H."/>
        </authorList>
    </citation>
    <scope>SUBCELLULAR LOCATION</scope>
    <scope>INTERACTION WITH KINA</scope>
</reference>
<organism>
    <name type="scientific">Emericella nidulans</name>
    <name type="common">Aspergillus nidulans</name>
    <dbReference type="NCBI Taxonomy" id="162425"/>
    <lineage>
        <taxon>Eukaryota</taxon>
        <taxon>Fungi</taxon>
        <taxon>Dikarya</taxon>
        <taxon>Ascomycota</taxon>
        <taxon>Pezizomycotina</taxon>
        <taxon>Eurotiomycetes</taxon>
        <taxon>Eurotiomycetidae</taxon>
        <taxon>Eurotiales</taxon>
        <taxon>Aspergillaceae</taxon>
        <taxon>Aspergillus</taxon>
        <taxon>Aspergillus subgen. Nidulantes</taxon>
    </lineage>
</organism>
<sequence>MVGTLPAGHTPSHVQSSLPSLPAHLQSDTHLTAHLASRFHVGLPTARLSSHALISLNNYTSSSKGPDGGKEGSAMGETEDLARRAYTRLGARGENQAIVFLGESGAGKTTLRSHLLSSFLSFSSTPLSSKLSYAAFIFDTLTTTKSLTTPTASKAGLFLELQYDASSSVNPTLIGGKIIDHRLERSRIASVPTGERSFHVLYYLLAGTSAAEKAHLGLDSPIHVTTAGGRLSSADHKRWRYLGHPTQLKVGINDADGFQHFKTALRKLEFPRSEIAEICQILAAILHIGQLDFGSGQATLTGAEESGGYSHEGGETVTVVKNKDVLSIIAAFLGLGVGELEASFGYRTKTIHRERVTVMLDPKGARRSADELSRVLYSLLVAYVIENVNQRICAAEDSVANTVSIIDFPGFAQACSTGSTLDQLLNNAACESLYNFCLRSFFDRKADMLEREEVAVPATSYFDNTDAVRGLLKQGNGLLSILDDQTRRGRTDAQFVEAVRRRFENKNPAITAGASGSGNGYGMVSQNARSSFTVKHFAGEVDYSATGLLEENGEVISGDLMNLMKSTRSDFVRELFGQEALQTVAHPKEKTAIMQAQVSSKPLRMPSMARRKTSPASRLTFDATPAEDPYETESQTGSSAKNSSAKRKSGMLMGGMQCAAGQFLSSLDIVNKCLTSGNLNPYFVFCLKPNDRRIANQFDSKCVRTQIQTLGIAEISQRLRNADFSVFLPFAEFLGLAEVGNVVVGSDKEKSEVVLDEKRWPGNEARVGSTGVFLSERCWADLAKVGERVIPSFAAEDDGGDALLHPRTANYADSKVRLLNPSDHSPGAYIYGDESKQASNTSRDFDGRSDAGYSAFNSGDMFHNLETREQMLEKGNEKQMEEVDEVPVSGSRKRWMAIVWLLTFYIPTPAIRYIGRMKRKDIQIAWREKFAINLLIWLACAIAVFIIVGFPSLICPTQHVYSPAELSSHDGKDGHSSYTSIRGLVLDLGEFMDSHYPGIVPDSALKKYAGVDSTALFPVQVSALCLGKDGNVDPKVLLDYKPTNFSGSVTSTSSGDPNSVYHDFRYFRDDYRPDWYAEQMIYLRANYYKGWIGYSSEYLHTLASKSQNVASINGKIYDLTSYIAGGRRIQGREGDDTTGIDTDFMDSLVVDLFQQKAGEDITKYWEDLPLTPKLRVDMMDCLNNLFIVGHVDTRNSTQCQFARYFILAISVLICSVIVFKFFAALQFGKKNVPENLDKFIICQVPAYTEDEESLRRAIDSMARMQYDDKRKLLVVICDGMIIGQGNDRPTPRIVLDILGVPESVDPEPLSFESLGEGMKQHNMGKVYSGLYEVQGHIVPFLVVVKVGKPSEVSRPGNRGKRDSQMVLMRFLNRVHYNLPMSPMELEMHHHIRNIIGVNPTFYEFILQVDADTVVAPDAATRMVSSCLNDTRIIGVCGETSLTNAKTSAVTMIQVYEYYISHNLTKAFESLFGSITCLPGCFTMYRIRSAESGKPLFVSKEIVEAYSEIRVDTLHMKNLLHLGEDRYLTTLLLKHHPKFKTKYNFRAQAYTIAPESWTVFLSQRRRWINSTVHNLVELIPLQQLCGFCCFSMRFVVFIDLISTIIMPVTVAYIVYLIVWLVRDTSTIPWTSFLLLAAIYGLQAIIFIVRRKWEMIGWMIIYILAIPVYSLALPLYSFWHMDDFSWGNTRIITGEKGRKIVISDEGKFDPASIPKKRWEEYQAELWEAQTSRDDRSEISGISYGTKYHPATQSEYGFPGSRPMSQLELPRHMSRMSLAPSEMMSRHMDMELEDVNLPSDDAILSEIRDILRTADLMTVTKKNIKQELERRFGVNLDAKRPYINSATEAVLSGNL</sequence>
<accession>O13281</accession>
<accession>Q00787</accession>
<accession>Q5AZG2</accession>
<gene>
    <name evidence="12" type="primary">csmA</name>
</gene>
<comment type="function">
    <text evidence="7 8 9 10 14">Polymerizes chitin, a structural polymer of the cell wall and septum, by transferring the sugar moiety of UDP-GlcNAc to the non-reducing end of the growing chitin polymer (Probable). Plays an important role in polarized hyphal cell wall synthesis and maintenance of cell wall integrity (PubMed:10368147, PubMed:15703213, PubMed:16468983). Its role in growth and morphogenesis is particularly important under low osmotic conditions (PubMed:12379226).</text>
</comment>
<comment type="catalytic activity">
    <reaction evidence="14">
        <text>[(1-&gt;4)-N-acetyl-beta-D-glucosaminyl](n) + UDP-N-acetyl-alpha-D-glucosamine = [(1-&gt;4)-N-acetyl-beta-D-glucosaminyl](n+1) + UDP + H(+)</text>
        <dbReference type="Rhea" id="RHEA:16637"/>
        <dbReference type="Rhea" id="RHEA-COMP:9593"/>
        <dbReference type="Rhea" id="RHEA-COMP:9595"/>
        <dbReference type="ChEBI" id="CHEBI:15378"/>
        <dbReference type="ChEBI" id="CHEBI:17029"/>
        <dbReference type="ChEBI" id="CHEBI:57705"/>
        <dbReference type="ChEBI" id="CHEBI:58223"/>
        <dbReference type="EC" id="2.4.1.16"/>
    </reaction>
    <physiologicalReaction direction="left-to-right" evidence="14">
        <dbReference type="Rhea" id="RHEA:16638"/>
    </physiologicalReaction>
</comment>
<comment type="subunit">
    <text evidence="9 11">Binds F-actin via its N-terminal myosin motor-like domain (MMD) (PubMed:15703213). Interacts with kibesin kinA (PubMed:25955346).</text>
</comment>
<comment type="subcellular location">
    <subcellularLocation>
        <location evidence="9 11">Cell membrane</location>
        <topology evidence="1">Multi-pass membrane protein</topology>
    </subcellularLocation>
    <subcellularLocation>
        <location evidence="9 11">Cell septum</location>
    </subcellularLocation>
    <subcellularLocation>
        <location evidence="9 11">Cell tip</location>
    </subcellularLocation>
    <text evidence="9">Localization to the hyphal tips depends on conventional kinesin kinA (PubMed:15703213). Concentrates at the hyphal tips and septation sites near actin structures, which is dependent on the actin-binding ability of the N-terminal myosin motor-like domain (MMD) (PubMed:15703213).</text>
</comment>
<comment type="induction">
    <text evidence="8">Expression is increased under low osmotic conditions (PubMed:12379226). An abaA response element (ARE) and two CCAAT sequences, to which the HAP complex binds, are found in the promoter region of csmA (PubMed:12379226). Moreover, consensus sequences that are recognized by Rlmp and Msn2/Msn4, transcription factors known to be involved in the response to osmotic stress, are also present in the promoter (PubMed:12379226).</text>
</comment>
<comment type="domain">
    <text evidence="7 9 15">The N-terminal myosin motor-like domain (MMD) does not seem to have motor activity but is indispensable for polarized cell wall synthesis via binding to actin that ensures the proper localization to the hyphal tips and septation sites near actin structures.</text>
</comment>
<comment type="disruption phenotype">
    <text evidence="7">Severely inhibits hyphal growth in the presence of chitin-binding reagent, Calcofluor white or Congo red (PubMed:10368147). Leads to morphological abnormalities in tip growth and septum formation (PubMed:10368147). Also results in proliferation of intracellular new hyphae, called intrahyphal hyphae (PubMed:10368147).</text>
</comment>
<comment type="similarity">
    <text evidence="13">In the N-terminal section; belongs to the TRAFAC class myosin-kinesin ATPase superfamily. Myosin family.</text>
</comment>
<comment type="similarity">
    <text evidence="13">In the C-terminal section; belongs to the chitin synthase family. Class V subfamily.</text>
</comment>
<dbReference type="EC" id="2.4.1.16" evidence="14"/>
<dbReference type="EMBL" id="AB000125">
    <property type="protein sequence ID" value="BAA21714.1"/>
    <property type="molecule type" value="Genomic_DNA"/>
</dbReference>
<dbReference type="PIR" id="JC5546">
    <property type="entry name" value="JC5546"/>
</dbReference>
<dbReference type="SMR" id="O13281"/>
<dbReference type="CAZy" id="GT2">
    <property type="family name" value="Glycosyltransferase Family 2"/>
</dbReference>
<dbReference type="OMA" id="LEMHHQI"/>
<dbReference type="BRENDA" id="2.4.1.16">
    <property type="organism ID" value="517"/>
</dbReference>
<dbReference type="GO" id="GO:0030428">
    <property type="term" value="C:cell septum"/>
    <property type="evidence" value="ECO:0007669"/>
    <property type="project" value="UniProtKB-SubCell"/>
</dbReference>
<dbReference type="GO" id="GO:0051286">
    <property type="term" value="C:cell tip"/>
    <property type="evidence" value="ECO:0007669"/>
    <property type="project" value="UniProtKB-SubCell"/>
</dbReference>
<dbReference type="GO" id="GO:0016459">
    <property type="term" value="C:myosin complex"/>
    <property type="evidence" value="ECO:0007669"/>
    <property type="project" value="UniProtKB-KW"/>
</dbReference>
<dbReference type="GO" id="GO:0005886">
    <property type="term" value="C:plasma membrane"/>
    <property type="evidence" value="ECO:0007669"/>
    <property type="project" value="UniProtKB-SubCell"/>
</dbReference>
<dbReference type="GO" id="GO:0003779">
    <property type="term" value="F:actin binding"/>
    <property type="evidence" value="ECO:0007669"/>
    <property type="project" value="UniProtKB-KW"/>
</dbReference>
<dbReference type="GO" id="GO:0005524">
    <property type="term" value="F:ATP binding"/>
    <property type="evidence" value="ECO:0007669"/>
    <property type="project" value="UniProtKB-KW"/>
</dbReference>
<dbReference type="GO" id="GO:0004100">
    <property type="term" value="F:chitin synthase activity"/>
    <property type="evidence" value="ECO:0007669"/>
    <property type="project" value="UniProtKB-EC"/>
</dbReference>
<dbReference type="GO" id="GO:0003774">
    <property type="term" value="F:cytoskeletal motor activity"/>
    <property type="evidence" value="ECO:0007669"/>
    <property type="project" value="InterPro"/>
</dbReference>
<dbReference type="GO" id="GO:0006031">
    <property type="term" value="P:chitin biosynthetic process"/>
    <property type="evidence" value="ECO:0007669"/>
    <property type="project" value="TreeGrafter"/>
</dbReference>
<dbReference type="GO" id="GO:0048315">
    <property type="term" value="P:conidium formation"/>
    <property type="evidence" value="ECO:0007669"/>
    <property type="project" value="UniProtKB-ARBA"/>
</dbReference>
<dbReference type="GO" id="GO:0031505">
    <property type="term" value="P:fungal-type cell wall organization"/>
    <property type="evidence" value="ECO:0007669"/>
    <property type="project" value="TreeGrafter"/>
</dbReference>
<dbReference type="CDD" id="cd14879">
    <property type="entry name" value="MYSc_Myo17"/>
    <property type="match status" value="1"/>
</dbReference>
<dbReference type="FunFam" id="1.10.10.60:FF:000337">
    <property type="entry name" value="Chitin synthase 8"/>
    <property type="match status" value="1"/>
</dbReference>
<dbReference type="FunFam" id="1.10.10.820:FF:000012">
    <property type="entry name" value="Chitin synthase ChsE"/>
    <property type="match status" value="1"/>
</dbReference>
<dbReference type="FunFam" id="1.20.58.530:FF:000017">
    <property type="entry name" value="Chitin synthase ChsE"/>
    <property type="match status" value="1"/>
</dbReference>
<dbReference type="FunFam" id="3.10.120.10:FF:000019">
    <property type="entry name" value="Chitin synthase ChsE"/>
    <property type="match status" value="1"/>
</dbReference>
<dbReference type="FunFam" id="3.40.850.10:FF:000055">
    <property type="entry name" value="Chitin synthase ChsE"/>
    <property type="match status" value="1"/>
</dbReference>
<dbReference type="Gene3D" id="1.10.10.820">
    <property type="match status" value="1"/>
</dbReference>
<dbReference type="Gene3D" id="1.20.58.530">
    <property type="match status" value="1"/>
</dbReference>
<dbReference type="Gene3D" id="3.10.120.10">
    <property type="entry name" value="Cytochrome b5-like heme/steroid binding domain"/>
    <property type="match status" value="1"/>
</dbReference>
<dbReference type="Gene3D" id="1.10.10.60">
    <property type="entry name" value="Homeodomain-like"/>
    <property type="match status" value="1"/>
</dbReference>
<dbReference type="Gene3D" id="3.40.850.10">
    <property type="entry name" value="Kinesin motor domain"/>
    <property type="match status" value="1"/>
</dbReference>
<dbReference type="Gene3D" id="1.20.120.720">
    <property type="entry name" value="Myosin VI head, motor domain, U50 subdomain"/>
    <property type="match status" value="1"/>
</dbReference>
<dbReference type="InterPro" id="IPR004835">
    <property type="entry name" value="Chitin_synth"/>
</dbReference>
<dbReference type="InterPro" id="IPR001199">
    <property type="entry name" value="Cyt_B5-like_heme/steroid-bd"/>
</dbReference>
<dbReference type="InterPro" id="IPR036400">
    <property type="entry name" value="Cyt_B5-like_heme/steroid_sf"/>
</dbReference>
<dbReference type="InterPro" id="IPR014876">
    <property type="entry name" value="DEK_C"/>
</dbReference>
<dbReference type="InterPro" id="IPR036961">
    <property type="entry name" value="Kinesin_motor_dom_sf"/>
</dbReference>
<dbReference type="InterPro" id="IPR001609">
    <property type="entry name" value="Myosin_head_motor_dom-like"/>
</dbReference>
<dbReference type="InterPro" id="IPR036037">
    <property type="entry name" value="MYSc_Myo17"/>
</dbReference>
<dbReference type="InterPro" id="IPR029044">
    <property type="entry name" value="Nucleotide-diphossugar_trans"/>
</dbReference>
<dbReference type="InterPro" id="IPR027417">
    <property type="entry name" value="P-loop_NTPase"/>
</dbReference>
<dbReference type="PANTHER" id="PTHR22914">
    <property type="entry name" value="CHITIN SYNTHASE"/>
    <property type="match status" value="1"/>
</dbReference>
<dbReference type="PANTHER" id="PTHR22914:SF45">
    <property type="entry name" value="CHITIN SYNTHASE"/>
    <property type="match status" value="1"/>
</dbReference>
<dbReference type="Pfam" id="PF03142">
    <property type="entry name" value="Chitin_synth_2"/>
    <property type="match status" value="1"/>
</dbReference>
<dbReference type="Pfam" id="PF00173">
    <property type="entry name" value="Cyt-b5"/>
    <property type="match status" value="1"/>
</dbReference>
<dbReference type="Pfam" id="PF08766">
    <property type="entry name" value="DEK_C"/>
    <property type="match status" value="1"/>
</dbReference>
<dbReference type="Pfam" id="PF00063">
    <property type="entry name" value="Myosin_head"/>
    <property type="match status" value="1"/>
</dbReference>
<dbReference type="SMART" id="SM01117">
    <property type="entry name" value="Cyt-b5"/>
    <property type="match status" value="2"/>
</dbReference>
<dbReference type="SMART" id="SM00242">
    <property type="entry name" value="MYSc"/>
    <property type="match status" value="1"/>
</dbReference>
<dbReference type="SUPFAM" id="SSF55856">
    <property type="entry name" value="Cytochrome b5-like heme/steroid binding domain"/>
    <property type="match status" value="1"/>
</dbReference>
<dbReference type="SUPFAM" id="SSF109715">
    <property type="entry name" value="DEK C-terminal domain"/>
    <property type="match status" value="1"/>
</dbReference>
<dbReference type="SUPFAM" id="SSF53448">
    <property type="entry name" value="Nucleotide-diphospho-sugar transferases"/>
    <property type="match status" value="1"/>
</dbReference>
<dbReference type="SUPFAM" id="SSF52540">
    <property type="entry name" value="P-loop containing nucleoside triphosphate hydrolases"/>
    <property type="match status" value="1"/>
</dbReference>
<dbReference type="PROSITE" id="PS50255">
    <property type="entry name" value="CYTOCHROME_B5_2"/>
    <property type="match status" value="1"/>
</dbReference>
<dbReference type="PROSITE" id="PS51998">
    <property type="entry name" value="DEK_C"/>
    <property type="match status" value="1"/>
</dbReference>
<dbReference type="PROSITE" id="PS51456">
    <property type="entry name" value="MYOSIN_MOTOR"/>
    <property type="match status" value="1"/>
</dbReference>
<proteinExistence type="evidence at protein level"/>
<feature type="chain" id="PRO_0000460855" description="Chitin synthase csmA">
    <location>
        <begin position="1"/>
        <end position="1852"/>
    </location>
</feature>
<feature type="transmembrane region" description="Helical" evidence="1">
    <location>
        <begin position="895"/>
        <end position="915"/>
    </location>
</feature>
<feature type="transmembrane region" description="Helical" evidence="1">
    <location>
        <begin position="930"/>
        <end position="950"/>
    </location>
</feature>
<feature type="transmembrane region" description="Helical" evidence="1">
    <location>
        <begin position="1205"/>
        <end position="1225"/>
    </location>
</feature>
<feature type="transmembrane region" description="Helical" evidence="1">
    <location>
        <begin position="1600"/>
        <end position="1620"/>
    </location>
</feature>
<feature type="transmembrane region" description="Helical" evidence="1">
    <location>
        <begin position="1626"/>
        <end position="1646"/>
    </location>
</feature>
<feature type="transmembrane region" description="Helical" evidence="1">
    <location>
        <begin position="1653"/>
        <end position="1673"/>
    </location>
</feature>
<feature type="domain" description="Myosin motor" evidence="4">
    <location>
        <begin position="1"/>
        <end position="787"/>
    </location>
</feature>
<feature type="domain" description="Cytochrome b5 heme-binding" evidence="2">
    <location>
        <begin position="958"/>
        <end position="1017"/>
    </location>
</feature>
<feature type="domain" description="DEK-C" evidence="5">
    <location>
        <begin position="1794"/>
        <end position="1849"/>
    </location>
</feature>
<feature type="region of interest" description="Disordered" evidence="6">
    <location>
        <begin position="1"/>
        <end position="20"/>
    </location>
</feature>
<feature type="region of interest" description="Disordered" evidence="6">
    <location>
        <begin position="599"/>
        <end position="646"/>
    </location>
</feature>
<feature type="region of interest" description="Actin-binding" evidence="4">
    <location>
        <begin position="667"/>
        <end position="691"/>
    </location>
</feature>
<feature type="binding site" evidence="4">
    <location>
        <begin position="102"/>
        <end position="109"/>
    </location>
    <ligand>
        <name>ATP</name>
        <dbReference type="ChEBI" id="CHEBI:30616"/>
    </ligand>
</feature>
<feature type="glycosylation site" description="N-linked (GlcNAc...) asparagine" evidence="3">
    <location>
        <position position="58"/>
    </location>
</feature>
<feature type="glycosylation site" description="N-linked (GlcNAc...) asparagine" evidence="3">
    <location>
        <position position="642"/>
    </location>
</feature>
<feature type="glycosylation site" description="N-linked (GlcNAc...) asparagine" evidence="3">
    <location>
        <position position="840"/>
    </location>
</feature>
<feature type="glycosylation site" description="N-linked (GlcNAc...) asparagine" evidence="3">
    <location>
        <position position="1044"/>
    </location>
</feature>
<feature type="glycosylation site" description="N-linked (GlcNAc...) asparagine" evidence="3">
    <location>
        <position position="1195"/>
    </location>
</feature>
<feature type="glycosylation site" description="N-linked (GlcNAc...) asparagine" evidence="3">
    <location>
        <position position="1428"/>
    </location>
</feature>
<feature type="glycosylation site" description="N-linked (GlcNAc...) asparagine" evidence="3">
    <location>
        <position position="1462"/>
    </location>
</feature>
<feature type="glycosylation site" description="N-linked (GlcNAc...) asparagine" evidence="3">
    <location>
        <position position="1568"/>
    </location>
</feature>
<feature type="mutagenesis site" description="Abolished interactions between the MMD and F-actin and impairs localization at hyphal tips and septation sites." evidence="9">
    <original>RTKTIHRERV</original>
    <variation>AAAAAAAAAA</variation>
    <location>
        <begin position="347"/>
        <end position="356"/>
    </location>
</feature>
<feature type="mutagenesis site" description="Lowers interactions between the MMD and F-actin." evidence="9">
    <original>R</original>
    <variation>A</variation>
    <location>
        <position position="347"/>
    </location>
</feature>